<proteinExistence type="evidence at protein level"/>
<sequence length="1436" mass="161849">MEPADLSNLRGRSLRASIRGSMRGSIRENSNSIWRNNGAEVFSRSARDEDDEEALKWAALEKLPTYDRLRKGILFGSQGAAAEVDVDDSGVLERKNLLERLVKVADEDNEKFLLKLKNRIDRVGIDFPSIEVRFEHLNIDADAYVGSRALPTFTNFISNFVEGLLDSIHILPSKKRQVTILKDVSGIVKPCRMTLLLGPPGSGKTTLLLALAGKLDSALKVTGKVTYNGHELHEFVPQRTAAYISQHDLHIGEMTVRETLEFSARCQGVGSRYEMLAELSRREKAANIKPDADIDMFMKAASTEGQEAKVVTDYILKILGLDICADTMVGDQMIRGISGGQKKRVTTGEMIVGPSKALFMDEISTGLDSSTTYSIVNSLKQSVRIMKGTALISLLQPAPETYNLFDDIILLSDGYIVYEGPREEVLEFFESMGFKCPERKGAADFLQEVTSKKDQQQYWIRRDEPYRFITSKEFAEAYQSFHVGRKVSDELKTTFDKSKSHPAALTTQKYGIGKRQLLKVCTERELLLMQRNSFVYLFKFFQLLIIALMTMTIFFRTKMPRDSAEDGGIYSGALFFVVIMIMFNGLSELPMTLYKLPVFYKQRDFLFYPSWAYAIPSWILKIPVTFAEVGMWVFLTYYVMGFDPNVGRFFKQFLLLLLVNQMASALFRFIAAVGRTMGVASTFGAFALLLQFALGGFILARNDVKDWWIWGYWTSPLMYSVNAILVNEFDGQKWKHIVAGGTEPLGAAVVRARGFFPDAYWYWIGVGALAGFIVMFNIAYSVALAYLNPFDKPQATISDESENNESESSPQITSTQEGDSASENKKKGMVLPFDPHSITFDEVVYSVDMPPEMRESGTSDNRLVLLKSVSGAFRPGVLTALMGVSGAGKTTLMDVLAGRKTGGYIDGSIKISGYPKKQDTFARISGYCEQNDIHSPYVTVFESLVYSAWLRLPQDVNEEKRMMFVEEVMDLVELTPLRSALVGLPGVNGLSTEQRKRLTIAVELVANPSIIFMDEPTSGLDARAAAIVMRAVRNTVDTGRTVVCTIHQPSIDIFEAFDELFLMKRGGQEIYVGPLGRQSCHLIKYFESIPGVSKIVEGYNPATWMLEVTASSQEMALGVDFTDLYKKSDLYRRNKALIDELSVPRPGTSDLHFDSEFSQPFWTQCMACLWKQHWSYWRNPAYTAVRLIFTTFIALIFGTMFWDIGTKVSRNQDLVNAMGSMYAAVLFLGVQNSSSVQPVVSVERTVFYREKAAGMYSAIPYAFAQVLIEIPYIFVQATVYGLIVYSMIGFEWTVAKFFWDFFFMFFTFLYFTFFGMMTVAVTPNQNVASIVAGFFYTVWNLFSGFIVPRPRIPIWWRWYYWGCPIAWTLYGLVASQFGDLQDPLTDQNQTVEQFLRSNFGFKHDFLGVVAAVIVAFAVVFAFTFALGIKAFNFQRR</sequence>
<organism>
    <name type="scientific">Nicotiana plumbaginifolia</name>
    <name type="common">Leadwort-leaved tobacco</name>
    <name type="synonym">Tex-Mex tobacco</name>
    <dbReference type="NCBI Taxonomy" id="4092"/>
    <lineage>
        <taxon>Eukaryota</taxon>
        <taxon>Viridiplantae</taxon>
        <taxon>Streptophyta</taxon>
        <taxon>Embryophyta</taxon>
        <taxon>Tracheophyta</taxon>
        <taxon>Spermatophyta</taxon>
        <taxon>Magnoliopsida</taxon>
        <taxon>eudicotyledons</taxon>
        <taxon>Gunneridae</taxon>
        <taxon>Pentapetalae</taxon>
        <taxon>asterids</taxon>
        <taxon>lamiids</taxon>
        <taxon>Solanales</taxon>
        <taxon>Solanaceae</taxon>
        <taxon>Nicotianoideae</taxon>
        <taxon>Nicotianeae</taxon>
        <taxon>Nicotiana</taxon>
    </lineage>
</organism>
<feature type="chain" id="PRO_0000234653" description="Pleiotropic drug resistance protein 1">
    <location>
        <begin position="1"/>
        <end position="1436"/>
    </location>
</feature>
<feature type="transmembrane region" description="Helical" evidence="1">
    <location>
        <begin position="534"/>
        <end position="554"/>
    </location>
</feature>
<feature type="transmembrane region" description="Helical" evidence="1">
    <location>
        <begin position="567"/>
        <end position="587"/>
    </location>
</feature>
<feature type="transmembrane region" description="Helical" evidence="1">
    <location>
        <begin position="622"/>
        <end position="642"/>
    </location>
</feature>
<feature type="transmembrane region" description="Helical" evidence="1">
    <location>
        <begin position="653"/>
        <end position="673"/>
    </location>
</feature>
<feature type="transmembrane region" description="Helical" evidence="1">
    <location>
        <begin position="679"/>
        <end position="699"/>
    </location>
</feature>
<feature type="transmembrane region" description="Helical" evidence="1">
    <location>
        <begin position="707"/>
        <end position="727"/>
    </location>
</feature>
<feature type="transmembrane region" description="Helical" evidence="1">
    <location>
        <begin position="764"/>
        <end position="784"/>
    </location>
</feature>
<feature type="transmembrane region" description="Helical" evidence="1">
    <location>
        <begin position="1184"/>
        <end position="1204"/>
    </location>
</feature>
<feature type="transmembrane region" description="Helical" evidence="1">
    <location>
        <begin position="1214"/>
        <end position="1234"/>
    </location>
</feature>
<feature type="transmembrane region" description="Helical" evidence="1">
    <location>
        <begin position="1270"/>
        <end position="1290"/>
    </location>
</feature>
<feature type="transmembrane region" description="Helical" evidence="1">
    <location>
        <begin position="1301"/>
        <end position="1321"/>
    </location>
</feature>
<feature type="transmembrane region" description="Helical" evidence="1">
    <location>
        <begin position="1327"/>
        <end position="1347"/>
    </location>
</feature>
<feature type="transmembrane region" description="Helical" evidence="1">
    <location>
        <begin position="1358"/>
        <end position="1378"/>
    </location>
</feature>
<feature type="transmembrane region" description="Helical" evidence="1">
    <location>
        <begin position="1408"/>
        <end position="1428"/>
    </location>
</feature>
<feature type="domain" description="ABC transporter 1" evidence="2">
    <location>
        <begin position="165"/>
        <end position="438"/>
    </location>
</feature>
<feature type="domain" description="ABC transmembrane type-2 1">
    <location>
        <begin position="516"/>
        <end position="729"/>
    </location>
</feature>
<feature type="domain" description="ABC transporter 2" evidence="2">
    <location>
        <begin position="838"/>
        <end position="1090"/>
    </location>
</feature>
<feature type="domain" description="ABC transmembrane type-2 2">
    <location>
        <begin position="1163"/>
        <end position="1377"/>
    </location>
</feature>
<feature type="region of interest" description="Disordered" evidence="3">
    <location>
        <begin position="796"/>
        <end position="826"/>
    </location>
</feature>
<feature type="compositionally biased region" description="Polar residues" evidence="3">
    <location>
        <begin position="810"/>
        <end position="821"/>
    </location>
</feature>
<feature type="binding site" evidence="2">
    <location>
        <begin position="198"/>
        <end position="205"/>
    </location>
    <ligand>
        <name>ATP</name>
        <dbReference type="ChEBI" id="CHEBI:30616"/>
        <label>1</label>
    </ligand>
</feature>
<feature type="binding site" evidence="2">
    <location>
        <begin position="883"/>
        <end position="890"/>
    </location>
    <ligand>
        <name>ATP</name>
        <dbReference type="ChEBI" id="CHEBI:30616"/>
        <label>2</label>
    </ligand>
</feature>
<reference key="1">
    <citation type="journal article" date="2001" name="Plant Cell">
        <title>A plant plasma membrane ATP binding cassette-type transporter is involved in antifungal terpenoid secretion.</title>
        <authorList>
            <person name="Jasinski M."/>
            <person name="Stukkens Y."/>
            <person name="Degand H."/>
            <person name="Purnelle B."/>
            <person name="Marchand-Brynaert J."/>
            <person name="Boutry M."/>
        </authorList>
    </citation>
    <scope>NUCLEOTIDE SEQUENCE [MRNA]</scope>
    <scope>PROTEIN SEQUENCE OF 473-478 AND 1046-1052</scope>
    <scope>FUNCTION</scope>
    <scope>TISSUE SPECIFICITY</scope>
    <scope>SUBCELLULAR LOCATION</scope>
    <scope>INDUCTION</scope>
</reference>
<reference key="2">
    <citation type="journal article" date="2003" name="Plant J.">
        <title>Identification of regulatory sequence elements within the transcription promoter region of NpABC1, a gene encoding a plant ABC transporter induced by diterpenes.</title>
        <authorList>
            <person name="Grec S."/>
            <person name="Vanham D."/>
            <person name="de Ribaucourt J.C."/>
            <person name="Purnelle B."/>
            <person name="Boutry M."/>
        </authorList>
    </citation>
    <scope>INDUCTION</scope>
</reference>
<reference key="3">
    <citation type="journal article" date="2005" name="Plant Physiol.">
        <title>NpPDR1, a pleiotropic drug resistance-type ATP-binding cassette transporter from Nicotiana plumbaginifolia, plays a major role in plant pathogen defense.</title>
        <authorList>
            <person name="Stukkens Y."/>
            <person name="Bultreys A."/>
            <person name="Grec S."/>
            <person name="Trombik T."/>
            <person name="Vanham D."/>
            <person name="Boutry M."/>
        </authorList>
    </citation>
    <scope>FUNCTION</scope>
    <scope>TISSUE SPECIFICITY</scope>
    <scope>INDUCTION</scope>
</reference>
<reference key="4">
    <citation type="journal article" date="2006" name="FEBS Lett.">
        <title>Organization and function of the plant pleiotropic drug resistance ABC transporter family.</title>
        <authorList>
            <person name="Crouzet J."/>
            <person name="Trombik T."/>
            <person name="Fraysse A.S."/>
            <person name="Boutry M."/>
        </authorList>
    </citation>
    <scope>GENE FAMILY</scope>
    <scope>NOMENCLATURE</scope>
</reference>
<evidence type="ECO:0000255" key="1"/>
<evidence type="ECO:0000255" key="2">
    <source>
        <dbReference type="PROSITE-ProRule" id="PRU00434"/>
    </source>
</evidence>
<evidence type="ECO:0000256" key="3">
    <source>
        <dbReference type="SAM" id="MobiDB-lite"/>
    </source>
</evidence>
<evidence type="ECO:0000269" key="4">
    <source>
    </source>
</evidence>
<evidence type="ECO:0000269" key="5">
    <source>
    </source>
</evidence>
<evidence type="ECO:0000269" key="6">
    <source>
    </source>
</evidence>
<evidence type="ECO:0000305" key="7"/>
<comment type="function">
    <text evidence="4 6">Excretes secondary metabolites such as terpenes. Involved in both constitutive and jasmonic acid-dependent induced defense. Confers some resistance to sclareol and B.cinerea.</text>
</comment>
<comment type="subcellular location">
    <subcellularLocation>
        <location evidence="4">Cell membrane</location>
        <topology evidence="4">Multi-pass membrane protein</topology>
    </subcellularLocation>
</comment>
<comment type="tissue specificity">
    <text evidence="4 6">Roots, petals and leaf epidermis, where it is confined to glandular trichomes (at protein level).</text>
</comment>
<comment type="induction">
    <text evidence="4 5 6">By terpenes such as sclareolide and sclareol, and by some phytohormones such as jasmonic acid (JA) and ethylene. Strongly induced by compatible pathogens such as the fungus B.cinerea, and the bacteria P.syringae pv tabaci, as well as by non pathogenic bacteria such as P.fluorescens, and P.marginalis pv marginalis. Weak induction by incompatible pathogens such as P.syringae pv syringae (at protein level).</text>
</comment>
<comment type="similarity">
    <text evidence="7">Belongs to the ABC transporter superfamily. ABCG family. PDR (TC 3.A.1.205) subfamily.</text>
</comment>
<keyword id="KW-0067">ATP-binding</keyword>
<keyword id="KW-1003">Cell membrane</keyword>
<keyword id="KW-0903">Direct protein sequencing</keyword>
<keyword id="KW-0472">Membrane</keyword>
<keyword id="KW-0547">Nucleotide-binding</keyword>
<keyword id="KW-0611">Plant defense</keyword>
<keyword id="KW-0677">Repeat</keyword>
<keyword id="KW-0812">Transmembrane</keyword>
<keyword id="KW-1133">Transmembrane helix</keyword>
<keyword id="KW-0813">Transport</keyword>
<dbReference type="EMBL" id="AJ404328">
    <property type="protein sequence ID" value="CAC40990.1"/>
    <property type="molecule type" value="mRNA"/>
</dbReference>
<dbReference type="SMR" id="Q949G3"/>
<dbReference type="TCDB" id="3.A.1.205.21">
    <property type="family name" value="the atp-binding cassette (abc) superfamily"/>
</dbReference>
<dbReference type="GO" id="GO:0005886">
    <property type="term" value="C:plasma membrane"/>
    <property type="evidence" value="ECO:0007669"/>
    <property type="project" value="UniProtKB-SubCell"/>
</dbReference>
<dbReference type="GO" id="GO:0140359">
    <property type="term" value="F:ABC-type transporter activity"/>
    <property type="evidence" value="ECO:0007669"/>
    <property type="project" value="InterPro"/>
</dbReference>
<dbReference type="GO" id="GO:0005524">
    <property type="term" value="F:ATP binding"/>
    <property type="evidence" value="ECO:0007669"/>
    <property type="project" value="UniProtKB-KW"/>
</dbReference>
<dbReference type="GO" id="GO:0016887">
    <property type="term" value="F:ATP hydrolysis activity"/>
    <property type="evidence" value="ECO:0007669"/>
    <property type="project" value="InterPro"/>
</dbReference>
<dbReference type="GO" id="GO:0006952">
    <property type="term" value="P:defense response"/>
    <property type="evidence" value="ECO:0007669"/>
    <property type="project" value="UniProtKB-KW"/>
</dbReference>
<dbReference type="CDD" id="cd03233">
    <property type="entry name" value="ABCG_PDR_domain1"/>
    <property type="match status" value="1"/>
</dbReference>
<dbReference type="CDD" id="cd03232">
    <property type="entry name" value="ABCG_PDR_domain2"/>
    <property type="match status" value="1"/>
</dbReference>
<dbReference type="FunFam" id="3.40.50.300:FF:000179">
    <property type="entry name" value="ABC transporter G family member 34"/>
    <property type="match status" value="1"/>
</dbReference>
<dbReference type="FunFam" id="3.40.50.300:FF:000059">
    <property type="entry name" value="ABC transporter G family member 40"/>
    <property type="match status" value="1"/>
</dbReference>
<dbReference type="Gene3D" id="3.40.50.300">
    <property type="entry name" value="P-loop containing nucleotide triphosphate hydrolases"/>
    <property type="match status" value="2"/>
</dbReference>
<dbReference type="InterPro" id="IPR003593">
    <property type="entry name" value="AAA+_ATPase"/>
</dbReference>
<dbReference type="InterPro" id="IPR013525">
    <property type="entry name" value="ABC2_TM"/>
</dbReference>
<dbReference type="InterPro" id="IPR029481">
    <property type="entry name" value="ABC_trans_N"/>
</dbReference>
<dbReference type="InterPro" id="IPR003439">
    <property type="entry name" value="ABC_transporter-like_ATP-bd"/>
</dbReference>
<dbReference type="InterPro" id="IPR043926">
    <property type="entry name" value="ABCG_dom"/>
</dbReference>
<dbReference type="InterPro" id="IPR034001">
    <property type="entry name" value="ABCG_PDR_1"/>
</dbReference>
<dbReference type="InterPro" id="IPR034003">
    <property type="entry name" value="ABCG_PDR_2"/>
</dbReference>
<dbReference type="InterPro" id="IPR027417">
    <property type="entry name" value="P-loop_NTPase"/>
</dbReference>
<dbReference type="InterPro" id="IPR013581">
    <property type="entry name" value="PDR_assoc"/>
</dbReference>
<dbReference type="PANTHER" id="PTHR48040:SF27">
    <property type="entry name" value="PLEIOTROPIC DRUG RESISTANCE PROTEIN 1"/>
    <property type="match status" value="1"/>
</dbReference>
<dbReference type="PANTHER" id="PTHR48040">
    <property type="entry name" value="PLEIOTROPIC DRUG RESISTANCE PROTEIN 1-LIKE ISOFORM X1"/>
    <property type="match status" value="1"/>
</dbReference>
<dbReference type="Pfam" id="PF01061">
    <property type="entry name" value="ABC2_membrane"/>
    <property type="match status" value="2"/>
</dbReference>
<dbReference type="Pfam" id="PF19055">
    <property type="entry name" value="ABC2_membrane_7"/>
    <property type="match status" value="1"/>
</dbReference>
<dbReference type="Pfam" id="PF00005">
    <property type="entry name" value="ABC_tran"/>
    <property type="match status" value="2"/>
</dbReference>
<dbReference type="Pfam" id="PF14510">
    <property type="entry name" value="ABC_trans_N"/>
    <property type="match status" value="1"/>
</dbReference>
<dbReference type="Pfam" id="PF08370">
    <property type="entry name" value="PDR_assoc"/>
    <property type="match status" value="1"/>
</dbReference>
<dbReference type="SMART" id="SM00382">
    <property type="entry name" value="AAA"/>
    <property type="match status" value="2"/>
</dbReference>
<dbReference type="SUPFAM" id="SSF52540">
    <property type="entry name" value="P-loop containing nucleoside triphosphate hydrolases"/>
    <property type="match status" value="2"/>
</dbReference>
<dbReference type="PROSITE" id="PS50893">
    <property type="entry name" value="ABC_TRANSPORTER_2"/>
    <property type="match status" value="2"/>
</dbReference>
<gene>
    <name type="primary">PDR1</name>
    <name type="synonym">ABC1</name>
</gene>
<accession>Q949G3</accession>
<protein>
    <recommendedName>
        <fullName>Pleiotropic drug resistance protein 1</fullName>
    </recommendedName>
    <alternativeName>
        <fullName>NpPDR1</fullName>
    </alternativeName>
</protein>
<name>PDR1_NICPL</name>